<keyword id="KW-0119">Carbohydrate metabolism</keyword>
<keyword id="KW-0963">Cytoplasm</keyword>
<keyword id="KW-0413">Isomerase</keyword>
<organism>
    <name type="scientific">Haemophilus influenzae (strain PittGG)</name>
    <dbReference type="NCBI Taxonomy" id="374931"/>
    <lineage>
        <taxon>Bacteria</taxon>
        <taxon>Pseudomonadati</taxon>
        <taxon>Pseudomonadota</taxon>
        <taxon>Gammaproteobacteria</taxon>
        <taxon>Pasteurellales</taxon>
        <taxon>Pasteurellaceae</taxon>
        <taxon>Haemophilus</taxon>
    </lineage>
</organism>
<proteinExistence type="inferred from homology"/>
<comment type="function">
    <text evidence="1">Catalyzes the interconversion of beta-pyran and beta-furan forms of D-ribose.</text>
</comment>
<comment type="catalytic activity">
    <reaction evidence="1">
        <text>beta-D-ribopyranose = beta-D-ribofuranose</text>
        <dbReference type="Rhea" id="RHEA:25432"/>
        <dbReference type="ChEBI" id="CHEBI:27476"/>
        <dbReference type="ChEBI" id="CHEBI:47002"/>
        <dbReference type="EC" id="5.4.99.62"/>
    </reaction>
</comment>
<comment type="pathway">
    <text evidence="1">Carbohydrate metabolism; D-ribose degradation; D-ribose 5-phosphate from beta-D-ribopyranose: step 1/2.</text>
</comment>
<comment type="subunit">
    <text evidence="1">Homodecamer.</text>
</comment>
<comment type="subcellular location">
    <subcellularLocation>
        <location evidence="1">Cytoplasm</location>
    </subcellularLocation>
</comment>
<comment type="similarity">
    <text evidence="1">Belongs to the RbsD / FucU family. RbsD subfamily.</text>
</comment>
<reference key="1">
    <citation type="journal article" date="2007" name="Genome Biol.">
        <title>Characterization and modeling of the Haemophilus influenzae core and supragenomes based on the complete genomic sequences of Rd and 12 clinical nontypeable strains.</title>
        <authorList>
            <person name="Hogg J.S."/>
            <person name="Hu F.Z."/>
            <person name="Janto B."/>
            <person name="Boissy R."/>
            <person name="Hayes J."/>
            <person name="Keefe R."/>
            <person name="Post J.C."/>
            <person name="Ehrlich G.D."/>
        </authorList>
    </citation>
    <scope>NUCLEOTIDE SEQUENCE [LARGE SCALE GENOMIC DNA]</scope>
    <source>
        <strain>PittGG</strain>
    </source>
</reference>
<accession>A5UH08</accession>
<dbReference type="EC" id="5.4.99.62" evidence="1"/>
<dbReference type="EMBL" id="CP000672">
    <property type="protein sequence ID" value="ABR00064.1"/>
    <property type="molecule type" value="Genomic_DNA"/>
</dbReference>
<dbReference type="SMR" id="A5UH08"/>
<dbReference type="KEGG" id="hiq:CGSHiGG_05765"/>
<dbReference type="HOGENOM" id="CLU_135498_0_0_6"/>
<dbReference type="UniPathway" id="UPA00916">
    <property type="reaction ID" value="UER00888"/>
</dbReference>
<dbReference type="Proteomes" id="UP000001990">
    <property type="component" value="Chromosome"/>
</dbReference>
<dbReference type="GO" id="GO:0005829">
    <property type="term" value="C:cytosol"/>
    <property type="evidence" value="ECO:0007669"/>
    <property type="project" value="TreeGrafter"/>
</dbReference>
<dbReference type="GO" id="GO:0062193">
    <property type="term" value="F:D-ribose pyranase activity"/>
    <property type="evidence" value="ECO:0007669"/>
    <property type="project" value="UniProtKB-EC"/>
</dbReference>
<dbReference type="GO" id="GO:0016872">
    <property type="term" value="F:intramolecular lyase activity"/>
    <property type="evidence" value="ECO:0007669"/>
    <property type="project" value="UniProtKB-UniRule"/>
</dbReference>
<dbReference type="GO" id="GO:0048029">
    <property type="term" value="F:monosaccharide binding"/>
    <property type="evidence" value="ECO:0007669"/>
    <property type="project" value="InterPro"/>
</dbReference>
<dbReference type="GO" id="GO:0019303">
    <property type="term" value="P:D-ribose catabolic process"/>
    <property type="evidence" value="ECO:0007669"/>
    <property type="project" value="UniProtKB-UniRule"/>
</dbReference>
<dbReference type="FunFam" id="3.40.1650.10:FF:000002">
    <property type="entry name" value="D-ribose pyranase"/>
    <property type="match status" value="1"/>
</dbReference>
<dbReference type="Gene3D" id="3.40.1650.10">
    <property type="entry name" value="RbsD-like domain"/>
    <property type="match status" value="1"/>
</dbReference>
<dbReference type="HAMAP" id="MF_01661">
    <property type="entry name" value="D_rib_pyranase"/>
    <property type="match status" value="1"/>
</dbReference>
<dbReference type="InterPro" id="IPR023064">
    <property type="entry name" value="D-ribose_pyranase"/>
</dbReference>
<dbReference type="InterPro" id="IPR023750">
    <property type="entry name" value="RbsD-like_sf"/>
</dbReference>
<dbReference type="InterPro" id="IPR007721">
    <property type="entry name" value="RbsD_FucU"/>
</dbReference>
<dbReference type="NCBIfam" id="NF008761">
    <property type="entry name" value="PRK11797.1"/>
    <property type="match status" value="1"/>
</dbReference>
<dbReference type="PANTHER" id="PTHR37831">
    <property type="entry name" value="D-RIBOSE PYRANASE"/>
    <property type="match status" value="1"/>
</dbReference>
<dbReference type="PANTHER" id="PTHR37831:SF1">
    <property type="entry name" value="D-RIBOSE PYRANASE"/>
    <property type="match status" value="1"/>
</dbReference>
<dbReference type="Pfam" id="PF05025">
    <property type="entry name" value="RbsD_FucU"/>
    <property type="match status" value="1"/>
</dbReference>
<dbReference type="SUPFAM" id="SSF102546">
    <property type="entry name" value="RbsD-like"/>
    <property type="match status" value="1"/>
</dbReference>
<name>RBSD_HAEIG</name>
<gene>
    <name evidence="1" type="primary">rbsD</name>
    <name type="ordered locus">CGSHiGG_05765</name>
</gene>
<protein>
    <recommendedName>
        <fullName evidence="1">D-ribose pyranase</fullName>
        <ecNumber evidence="1">5.4.99.62</ecNumber>
    </recommendedName>
</protein>
<evidence type="ECO:0000255" key="1">
    <source>
        <dbReference type="HAMAP-Rule" id="MF_01661"/>
    </source>
</evidence>
<feature type="chain" id="PRO_0000346210" description="D-ribose pyranase">
    <location>
        <begin position="1"/>
        <end position="139"/>
    </location>
</feature>
<feature type="active site" description="Proton donor" evidence="1">
    <location>
        <position position="20"/>
    </location>
</feature>
<feature type="binding site" evidence="1">
    <location>
        <position position="28"/>
    </location>
    <ligand>
        <name>substrate</name>
    </ligand>
</feature>
<feature type="binding site" evidence="1">
    <location>
        <position position="106"/>
    </location>
    <ligand>
        <name>substrate</name>
    </ligand>
</feature>
<feature type="binding site" evidence="1">
    <location>
        <begin position="128"/>
        <end position="130"/>
    </location>
    <ligand>
        <name>substrate</name>
    </ligand>
</feature>
<sequence>MKKTALLNAQLSHCIATLGHTESLTICDAGLPIPLSVERIDLALTAGVPSFLQTLNVVTNEMYVERVVIAEEIKEKNPEILTALLTQLQQLESHQGNQIQVEFESHETFKKFTLESKAIVRTGECSPYANVILYSGVPF</sequence>